<keyword id="KW-0687">Ribonucleoprotein</keyword>
<keyword id="KW-0689">Ribosomal protein</keyword>
<keyword id="KW-0694">RNA-binding</keyword>
<keyword id="KW-0699">rRNA-binding</keyword>
<dbReference type="EMBL" id="AE008923">
    <property type="protein sequence ID" value="AAM35857.1"/>
    <property type="molecule type" value="Genomic_DNA"/>
</dbReference>
<dbReference type="RefSeq" id="WP_003486717.1">
    <property type="nucleotide sequence ID" value="NC_003919.1"/>
</dbReference>
<dbReference type="SMR" id="Q8PNS2"/>
<dbReference type="GeneID" id="77338711"/>
<dbReference type="KEGG" id="xac:XAC0974"/>
<dbReference type="eggNOG" id="COG0089">
    <property type="taxonomic scope" value="Bacteria"/>
</dbReference>
<dbReference type="HOGENOM" id="CLU_037562_3_1_6"/>
<dbReference type="Proteomes" id="UP000000576">
    <property type="component" value="Chromosome"/>
</dbReference>
<dbReference type="GO" id="GO:1990904">
    <property type="term" value="C:ribonucleoprotein complex"/>
    <property type="evidence" value="ECO:0007669"/>
    <property type="project" value="UniProtKB-KW"/>
</dbReference>
<dbReference type="GO" id="GO:0005840">
    <property type="term" value="C:ribosome"/>
    <property type="evidence" value="ECO:0007669"/>
    <property type="project" value="UniProtKB-KW"/>
</dbReference>
<dbReference type="GO" id="GO:0019843">
    <property type="term" value="F:rRNA binding"/>
    <property type="evidence" value="ECO:0007669"/>
    <property type="project" value="UniProtKB-UniRule"/>
</dbReference>
<dbReference type="GO" id="GO:0003735">
    <property type="term" value="F:structural constituent of ribosome"/>
    <property type="evidence" value="ECO:0007669"/>
    <property type="project" value="InterPro"/>
</dbReference>
<dbReference type="GO" id="GO:0006412">
    <property type="term" value="P:translation"/>
    <property type="evidence" value="ECO:0007669"/>
    <property type="project" value="UniProtKB-UniRule"/>
</dbReference>
<dbReference type="FunFam" id="3.30.70.330:FF:000001">
    <property type="entry name" value="50S ribosomal protein L23"/>
    <property type="match status" value="1"/>
</dbReference>
<dbReference type="Gene3D" id="3.30.70.330">
    <property type="match status" value="1"/>
</dbReference>
<dbReference type="HAMAP" id="MF_01369_B">
    <property type="entry name" value="Ribosomal_uL23_B"/>
    <property type="match status" value="1"/>
</dbReference>
<dbReference type="InterPro" id="IPR012677">
    <property type="entry name" value="Nucleotide-bd_a/b_plait_sf"/>
</dbReference>
<dbReference type="InterPro" id="IPR013025">
    <property type="entry name" value="Ribosomal_uL23-like"/>
</dbReference>
<dbReference type="InterPro" id="IPR012678">
    <property type="entry name" value="Ribosomal_uL23/eL15/eS24_sf"/>
</dbReference>
<dbReference type="NCBIfam" id="NF004359">
    <property type="entry name" value="PRK05738.1-3"/>
    <property type="match status" value="1"/>
</dbReference>
<dbReference type="NCBIfam" id="NF004363">
    <property type="entry name" value="PRK05738.2-4"/>
    <property type="match status" value="1"/>
</dbReference>
<dbReference type="PANTHER" id="PTHR11620">
    <property type="entry name" value="60S RIBOSOMAL PROTEIN L23A"/>
    <property type="match status" value="1"/>
</dbReference>
<dbReference type="Pfam" id="PF00276">
    <property type="entry name" value="Ribosomal_L23"/>
    <property type="match status" value="1"/>
</dbReference>
<dbReference type="SUPFAM" id="SSF54189">
    <property type="entry name" value="Ribosomal proteins S24e, L23 and L15e"/>
    <property type="match status" value="1"/>
</dbReference>
<feature type="chain" id="PRO_0000272874" description="Large ribosomal subunit protein uL23">
    <location>
        <begin position="1"/>
        <end position="99"/>
    </location>
</feature>
<evidence type="ECO:0000255" key="1">
    <source>
        <dbReference type="HAMAP-Rule" id="MF_01369"/>
    </source>
</evidence>
<evidence type="ECO:0000305" key="2"/>
<name>RL23_XANAC</name>
<comment type="function">
    <text evidence="1">One of the early assembly proteins it binds 23S rRNA. One of the proteins that surrounds the polypeptide exit tunnel on the outside of the ribosome. Forms the main docking site for trigger factor binding to the ribosome.</text>
</comment>
<comment type="subunit">
    <text evidence="1">Part of the 50S ribosomal subunit. Contacts protein L29, and trigger factor when it is bound to the ribosome.</text>
</comment>
<comment type="similarity">
    <text evidence="1">Belongs to the universal ribosomal protein uL23 family.</text>
</comment>
<gene>
    <name evidence="1" type="primary">rplW</name>
    <name type="ordered locus">XAC0974</name>
</gene>
<accession>Q8PNS2</accession>
<reference key="1">
    <citation type="journal article" date="2002" name="Nature">
        <title>Comparison of the genomes of two Xanthomonas pathogens with differing host specificities.</title>
        <authorList>
            <person name="da Silva A.C.R."/>
            <person name="Ferro J.A."/>
            <person name="Reinach F.C."/>
            <person name="Farah C.S."/>
            <person name="Furlan L.R."/>
            <person name="Quaggio R.B."/>
            <person name="Monteiro-Vitorello C.B."/>
            <person name="Van Sluys M.A."/>
            <person name="Almeida N.F. Jr."/>
            <person name="Alves L.M.C."/>
            <person name="do Amaral A.M."/>
            <person name="Bertolini M.C."/>
            <person name="Camargo L.E.A."/>
            <person name="Camarotte G."/>
            <person name="Cannavan F."/>
            <person name="Cardozo J."/>
            <person name="Chambergo F."/>
            <person name="Ciapina L.P."/>
            <person name="Cicarelli R.M.B."/>
            <person name="Coutinho L.L."/>
            <person name="Cursino-Santos J.R."/>
            <person name="El-Dorry H."/>
            <person name="Faria J.B."/>
            <person name="Ferreira A.J.S."/>
            <person name="Ferreira R.C.C."/>
            <person name="Ferro M.I.T."/>
            <person name="Formighieri E.F."/>
            <person name="Franco M.C."/>
            <person name="Greggio C.C."/>
            <person name="Gruber A."/>
            <person name="Katsuyama A.M."/>
            <person name="Kishi L.T."/>
            <person name="Leite R.P."/>
            <person name="Lemos E.G.M."/>
            <person name="Lemos M.V.F."/>
            <person name="Locali E.C."/>
            <person name="Machado M.A."/>
            <person name="Madeira A.M.B.N."/>
            <person name="Martinez-Rossi N.M."/>
            <person name="Martins E.C."/>
            <person name="Meidanis J."/>
            <person name="Menck C.F.M."/>
            <person name="Miyaki C.Y."/>
            <person name="Moon D.H."/>
            <person name="Moreira L.M."/>
            <person name="Novo M.T.M."/>
            <person name="Okura V.K."/>
            <person name="Oliveira M.C."/>
            <person name="Oliveira V.R."/>
            <person name="Pereira H.A."/>
            <person name="Rossi A."/>
            <person name="Sena J.A.D."/>
            <person name="Silva C."/>
            <person name="de Souza R.F."/>
            <person name="Spinola L.A.F."/>
            <person name="Takita M.A."/>
            <person name="Tamura R.E."/>
            <person name="Teixeira E.C."/>
            <person name="Tezza R.I.D."/>
            <person name="Trindade dos Santos M."/>
            <person name="Truffi D."/>
            <person name="Tsai S.M."/>
            <person name="White F.F."/>
            <person name="Setubal J.C."/>
            <person name="Kitajima J.P."/>
        </authorList>
    </citation>
    <scope>NUCLEOTIDE SEQUENCE [LARGE SCALE GENOMIC DNA]</scope>
    <source>
        <strain>306</strain>
    </source>
</reference>
<protein>
    <recommendedName>
        <fullName evidence="1">Large ribosomal subunit protein uL23</fullName>
    </recommendedName>
    <alternativeName>
        <fullName evidence="2">50S ribosomal protein L23</fullName>
    </alternativeName>
</protein>
<proteinExistence type="inferred from homology"/>
<sequence>MSSNEKIFSVLRAPRVSEKTARLQEISNQYVFEVSNEATKADVKAAVEQLFDVKVKAVNVVNVKGKSKSFRNRAGNRGNWRKAYVRLVDGQSIDVTAKA</sequence>
<organism>
    <name type="scientific">Xanthomonas axonopodis pv. citri (strain 306)</name>
    <dbReference type="NCBI Taxonomy" id="190486"/>
    <lineage>
        <taxon>Bacteria</taxon>
        <taxon>Pseudomonadati</taxon>
        <taxon>Pseudomonadota</taxon>
        <taxon>Gammaproteobacteria</taxon>
        <taxon>Lysobacterales</taxon>
        <taxon>Lysobacteraceae</taxon>
        <taxon>Xanthomonas</taxon>
    </lineage>
</organism>